<reference key="1">
    <citation type="journal article" date="2010" name="Zoology">
        <title>Transcriptome analysis of the venom glands of the Chinese wolf spider Lycosa singoriensis.</title>
        <authorList>
            <person name="Zhang Y."/>
            <person name="Chen J."/>
            <person name="Tang X."/>
            <person name="Wang F."/>
            <person name="Jiang L."/>
            <person name="Xiong X."/>
            <person name="Wang M."/>
            <person name="Rong M."/>
            <person name="Liu Z."/>
            <person name="Liang S."/>
        </authorList>
    </citation>
    <scope>NUCLEOTIDE SEQUENCE [LARGE SCALE MRNA]</scope>
    <source>
        <tissue>Venom gland</tissue>
    </source>
</reference>
<proteinExistence type="evidence at transcript level"/>
<protein>
    <recommendedName>
        <fullName>U1-lycotoxin-Ls1hh</fullName>
    </recommendedName>
    <alternativeName>
        <fullName>Toxin-like structure LSTX-A50</fullName>
    </alternativeName>
</protein>
<feature type="signal peptide" evidence="2">
    <location>
        <begin position="1"/>
        <end position="20"/>
    </location>
</feature>
<feature type="propeptide" id="PRO_0000401595" evidence="1">
    <location>
        <begin position="21"/>
        <end position="44"/>
    </location>
</feature>
<feature type="chain" id="PRO_0000401596" description="U1-lycotoxin-Ls1hh">
    <location>
        <begin position="45"/>
        <end position="110"/>
    </location>
</feature>
<feature type="disulfide bond" evidence="1">
    <location>
        <begin position="47"/>
        <end position="62"/>
    </location>
</feature>
<feature type="disulfide bond" evidence="1">
    <location>
        <begin position="54"/>
        <end position="71"/>
    </location>
</feature>
<feature type="disulfide bond" evidence="1">
    <location>
        <begin position="61"/>
        <end position="89"/>
    </location>
</feature>
<feature type="disulfide bond" evidence="1">
    <location>
        <begin position="73"/>
        <end position="87"/>
    </location>
</feature>
<dbReference type="EMBL" id="EU925973">
    <property type="protein sequence ID" value="ACI41305.1"/>
    <property type="molecule type" value="mRNA"/>
</dbReference>
<dbReference type="EMBL" id="FM863977">
    <property type="protein sequence ID" value="CAS03575.1"/>
    <property type="molecule type" value="mRNA"/>
</dbReference>
<dbReference type="SMR" id="B6DCN9"/>
<dbReference type="ArachnoServer" id="AS000922">
    <property type="toxin name" value="U1-lycotoxin-Ls1hh"/>
</dbReference>
<dbReference type="GO" id="GO:0005576">
    <property type="term" value="C:extracellular region"/>
    <property type="evidence" value="ECO:0007669"/>
    <property type="project" value="UniProtKB-SubCell"/>
</dbReference>
<dbReference type="GO" id="GO:0090729">
    <property type="term" value="F:toxin activity"/>
    <property type="evidence" value="ECO:0007669"/>
    <property type="project" value="UniProtKB-KW"/>
</dbReference>
<dbReference type="InterPro" id="IPR019553">
    <property type="entry name" value="Spider_toxin_CSTX_knottin"/>
</dbReference>
<dbReference type="InterPro" id="IPR011142">
    <property type="entry name" value="Spider_toxin_CSTX_Knottin_CS"/>
</dbReference>
<dbReference type="Pfam" id="PF10530">
    <property type="entry name" value="Toxin_35"/>
    <property type="match status" value="1"/>
</dbReference>
<dbReference type="PROSITE" id="PS60029">
    <property type="entry name" value="SPIDER_CSTX"/>
    <property type="match status" value="1"/>
</dbReference>
<evidence type="ECO:0000250" key="1"/>
<evidence type="ECO:0000255" key="2"/>
<evidence type="ECO:0000305" key="3"/>
<organism>
    <name type="scientific">Lycosa singoriensis</name>
    <name type="common">Wolf spider</name>
    <name type="synonym">Aranea singoriensis</name>
    <dbReference type="NCBI Taxonomy" id="434756"/>
    <lineage>
        <taxon>Eukaryota</taxon>
        <taxon>Metazoa</taxon>
        <taxon>Ecdysozoa</taxon>
        <taxon>Arthropoda</taxon>
        <taxon>Chelicerata</taxon>
        <taxon>Arachnida</taxon>
        <taxon>Araneae</taxon>
        <taxon>Araneomorphae</taxon>
        <taxon>Entelegynae</taxon>
        <taxon>Lycosoidea</taxon>
        <taxon>Lycosidae</taxon>
        <taxon>Lycosa</taxon>
    </lineage>
</organism>
<accession>B6DCN9</accession>
<comment type="subcellular location">
    <subcellularLocation>
        <location evidence="1">Secreted</location>
    </subcellularLocation>
</comment>
<comment type="tissue specificity">
    <text>Expressed by the venom gland.</text>
</comment>
<comment type="domain">
    <text evidence="1">The presence of a 'disulfide through disulfide knot' structurally defines this protein as a knottin.</text>
</comment>
<comment type="similarity">
    <text evidence="3">Belongs to the neurotoxin 19 (CSTX) family. 03 subfamily.</text>
</comment>
<keyword id="KW-1015">Disulfide bond</keyword>
<keyword id="KW-0960">Knottin</keyword>
<keyword id="KW-0964">Secreted</keyword>
<keyword id="KW-0732">Signal</keyword>
<keyword id="KW-0800">Toxin</keyword>
<name>TX150_LYCSI</name>
<sequence>MKFVLLFGVLLVTLFSYSSAEMLDDFDQADEDELLSLIEKEEARKDCIPKHYECTSNKHGCCRGHLFKYKCQCTTVVTQSGEETERCFCGTPPHHKAAELVVGFGKKIFG</sequence>